<organism>
    <name type="scientific">Nitrosomonas europaea (strain ATCC 19718 / CIP 103999 / KCTC 2705 / NBRC 14298)</name>
    <dbReference type="NCBI Taxonomy" id="228410"/>
    <lineage>
        <taxon>Bacteria</taxon>
        <taxon>Pseudomonadati</taxon>
        <taxon>Pseudomonadota</taxon>
        <taxon>Betaproteobacteria</taxon>
        <taxon>Nitrosomonadales</taxon>
        <taxon>Nitrosomonadaceae</taxon>
        <taxon>Nitrosomonas</taxon>
    </lineage>
</organism>
<reference key="1">
    <citation type="journal article" date="2003" name="J. Bacteriol.">
        <title>Complete genome sequence of the ammonia-oxidizing bacterium and obligate chemolithoautotroph Nitrosomonas europaea.</title>
        <authorList>
            <person name="Chain P."/>
            <person name="Lamerdin J.E."/>
            <person name="Larimer F.W."/>
            <person name="Regala W."/>
            <person name="Lao V."/>
            <person name="Land M.L."/>
            <person name="Hauser L."/>
            <person name="Hooper A.B."/>
            <person name="Klotz M.G."/>
            <person name="Norton J."/>
            <person name="Sayavedra-Soto L.A."/>
            <person name="Arciero D.M."/>
            <person name="Hommes N.G."/>
            <person name="Whittaker M.M."/>
            <person name="Arp D.J."/>
        </authorList>
    </citation>
    <scope>NUCLEOTIDE SEQUENCE [LARGE SCALE GENOMIC DNA]</scope>
    <source>
        <strain>ATCC 19718 / CIP 103999 / KCTC 2705 / NBRC 14298</strain>
    </source>
</reference>
<sequence>MARVCQVTGKRPMSGHNVSHANNKTKRRFLPNLQSRRFWLESENRWIRLRLTNAALRTVDKNGIDSVVADMRARGERV</sequence>
<dbReference type="EMBL" id="AL954747">
    <property type="protein sequence ID" value="CAD85376.1"/>
    <property type="molecule type" value="Genomic_DNA"/>
</dbReference>
<dbReference type="RefSeq" id="WP_011112033.1">
    <property type="nucleotide sequence ID" value="NC_004757.1"/>
</dbReference>
<dbReference type="SMR" id="Q82UL8"/>
<dbReference type="STRING" id="228410.NE1465"/>
<dbReference type="GeneID" id="87104639"/>
<dbReference type="KEGG" id="neu:NE1465"/>
<dbReference type="eggNOG" id="COG0227">
    <property type="taxonomic scope" value="Bacteria"/>
</dbReference>
<dbReference type="HOGENOM" id="CLU_064548_3_1_4"/>
<dbReference type="OrthoDB" id="9805609at2"/>
<dbReference type="PhylomeDB" id="Q82UL8"/>
<dbReference type="Proteomes" id="UP000001416">
    <property type="component" value="Chromosome"/>
</dbReference>
<dbReference type="GO" id="GO:0022625">
    <property type="term" value="C:cytosolic large ribosomal subunit"/>
    <property type="evidence" value="ECO:0007669"/>
    <property type="project" value="TreeGrafter"/>
</dbReference>
<dbReference type="GO" id="GO:0003735">
    <property type="term" value="F:structural constituent of ribosome"/>
    <property type="evidence" value="ECO:0007669"/>
    <property type="project" value="InterPro"/>
</dbReference>
<dbReference type="GO" id="GO:0006412">
    <property type="term" value="P:translation"/>
    <property type="evidence" value="ECO:0007669"/>
    <property type="project" value="UniProtKB-UniRule"/>
</dbReference>
<dbReference type="FunFam" id="2.30.170.40:FF:000001">
    <property type="entry name" value="50S ribosomal protein L28"/>
    <property type="match status" value="1"/>
</dbReference>
<dbReference type="Gene3D" id="2.30.170.40">
    <property type="entry name" value="Ribosomal protein L28/L24"/>
    <property type="match status" value="1"/>
</dbReference>
<dbReference type="HAMAP" id="MF_00373">
    <property type="entry name" value="Ribosomal_bL28"/>
    <property type="match status" value="1"/>
</dbReference>
<dbReference type="InterPro" id="IPR026569">
    <property type="entry name" value="Ribosomal_bL28"/>
</dbReference>
<dbReference type="InterPro" id="IPR034704">
    <property type="entry name" value="Ribosomal_bL28/bL31-like_sf"/>
</dbReference>
<dbReference type="InterPro" id="IPR001383">
    <property type="entry name" value="Ribosomal_bL28_bact-type"/>
</dbReference>
<dbReference type="InterPro" id="IPR037147">
    <property type="entry name" value="Ribosomal_bL28_sf"/>
</dbReference>
<dbReference type="NCBIfam" id="TIGR00009">
    <property type="entry name" value="L28"/>
    <property type="match status" value="1"/>
</dbReference>
<dbReference type="PANTHER" id="PTHR13528">
    <property type="entry name" value="39S RIBOSOMAL PROTEIN L28, MITOCHONDRIAL"/>
    <property type="match status" value="1"/>
</dbReference>
<dbReference type="PANTHER" id="PTHR13528:SF2">
    <property type="entry name" value="LARGE RIBOSOMAL SUBUNIT PROTEIN BL28M"/>
    <property type="match status" value="1"/>
</dbReference>
<dbReference type="Pfam" id="PF00830">
    <property type="entry name" value="Ribosomal_L28"/>
    <property type="match status" value="1"/>
</dbReference>
<dbReference type="SUPFAM" id="SSF143800">
    <property type="entry name" value="L28p-like"/>
    <property type="match status" value="1"/>
</dbReference>
<evidence type="ECO:0000255" key="1">
    <source>
        <dbReference type="HAMAP-Rule" id="MF_00373"/>
    </source>
</evidence>
<evidence type="ECO:0000256" key="2">
    <source>
        <dbReference type="SAM" id="MobiDB-lite"/>
    </source>
</evidence>
<evidence type="ECO:0000305" key="3"/>
<accession>Q82UL8</accession>
<name>RL28_NITEU</name>
<comment type="similarity">
    <text evidence="1">Belongs to the bacterial ribosomal protein bL28 family.</text>
</comment>
<keyword id="KW-1185">Reference proteome</keyword>
<keyword id="KW-0687">Ribonucleoprotein</keyword>
<keyword id="KW-0689">Ribosomal protein</keyword>
<feature type="chain" id="PRO_0000178517" description="Large ribosomal subunit protein bL28">
    <location>
        <begin position="1"/>
        <end position="78"/>
    </location>
</feature>
<feature type="region of interest" description="Disordered" evidence="2">
    <location>
        <begin position="1"/>
        <end position="26"/>
    </location>
</feature>
<proteinExistence type="inferred from homology"/>
<gene>
    <name evidence="1" type="primary">rpmB</name>
    <name type="ordered locus">NE1465</name>
</gene>
<protein>
    <recommendedName>
        <fullName evidence="1">Large ribosomal subunit protein bL28</fullName>
    </recommendedName>
    <alternativeName>
        <fullName evidence="3">50S ribosomal protein L28</fullName>
    </alternativeName>
</protein>